<reference key="1">
    <citation type="submission" date="2006-06" db="EMBL/GenBank/DDBJ databases">
        <title>Complete sequence of Pseudoalteromonas atlantica T6c.</title>
        <authorList>
            <consortium name="US DOE Joint Genome Institute"/>
            <person name="Copeland A."/>
            <person name="Lucas S."/>
            <person name="Lapidus A."/>
            <person name="Barry K."/>
            <person name="Detter J.C."/>
            <person name="Glavina del Rio T."/>
            <person name="Hammon N."/>
            <person name="Israni S."/>
            <person name="Dalin E."/>
            <person name="Tice H."/>
            <person name="Pitluck S."/>
            <person name="Saunders E."/>
            <person name="Brettin T."/>
            <person name="Bruce D."/>
            <person name="Han C."/>
            <person name="Tapia R."/>
            <person name="Gilna P."/>
            <person name="Schmutz J."/>
            <person name="Larimer F."/>
            <person name="Land M."/>
            <person name="Hauser L."/>
            <person name="Kyrpides N."/>
            <person name="Kim E."/>
            <person name="Karls A.C."/>
            <person name="Bartlett D."/>
            <person name="Higgins B.P."/>
            <person name="Richardson P."/>
        </authorList>
    </citation>
    <scope>NUCLEOTIDE SEQUENCE [LARGE SCALE GENOMIC DNA]</scope>
    <source>
        <strain>T6c / ATCC BAA-1087</strain>
    </source>
</reference>
<feature type="chain" id="PRO_1000063589" description="3-isopropylmalate dehydratase large subunit">
    <location>
        <begin position="1"/>
        <end position="468"/>
    </location>
</feature>
<feature type="binding site" evidence="1">
    <location>
        <position position="346"/>
    </location>
    <ligand>
        <name>[4Fe-4S] cluster</name>
        <dbReference type="ChEBI" id="CHEBI:49883"/>
    </ligand>
</feature>
<feature type="binding site" evidence="1">
    <location>
        <position position="406"/>
    </location>
    <ligand>
        <name>[4Fe-4S] cluster</name>
        <dbReference type="ChEBI" id="CHEBI:49883"/>
    </ligand>
</feature>
<feature type="binding site" evidence="1">
    <location>
        <position position="409"/>
    </location>
    <ligand>
        <name>[4Fe-4S] cluster</name>
        <dbReference type="ChEBI" id="CHEBI:49883"/>
    </ligand>
</feature>
<comment type="function">
    <text evidence="1">Catalyzes the isomerization between 2-isopropylmalate and 3-isopropylmalate, via the formation of 2-isopropylmaleate.</text>
</comment>
<comment type="catalytic activity">
    <reaction evidence="1">
        <text>(2R,3S)-3-isopropylmalate = (2S)-2-isopropylmalate</text>
        <dbReference type="Rhea" id="RHEA:32287"/>
        <dbReference type="ChEBI" id="CHEBI:1178"/>
        <dbReference type="ChEBI" id="CHEBI:35121"/>
        <dbReference type="EC" id="4.2.1.33"/>
    </reaction>
</comment>
<comment type="cofactor">
    <cofactor evidence="1">
        <name>[4Fe-4S] cluster</name>
        <dbReference type="ChEBI" id="CHEBI:49883"/>
    </cofactor>
    <text evidence="1">Binds 1 [4Fe-4S] cluster per subunit.</text>
</comment>
<comment type="pathway">
    <text evidence="1">Amino-acid biosynthesis; L-leucine biosynthesis; L-leucine from 3-methyl-2-oxobutanoate: step 2/4.</text>
</comment>
<comment type="subunit">
    <text evidence="1">Heterodimer of LeuC and LeuD.</text>
</comment>
<comment type="similarity">
    <text evidence="1">Belongs to the aconitase/IPM isomerase family. LeuC type 1 subfamily.</text>
</comment>
<proteinExistence type="inferred from homology"/>
<keyword id="KW-0004">4Fe-4S</keyword>
<keyword id="KW-0028">Amino-acid biosynthesis</keyword>
<keyword id="KW-0100">Branched-chain amino acid biosynthesis</keyword>
<keyword id="KW-0408">Iron</keyword>
<keyword id="KW-0411">Iron-sulfur</keyword>
<keyword id="KW-0432">Leucine biosynthesis</keyword>
<keyword id="KW-0456">Lyase</keyword>
<keyword id="KW-0479">Metal-binding</keyword>
<protein>
    <recommendedName>
        <fullName evidence="1">3-isopropylmalate dehydratase large subunit</fullName>
        <ecNumber evidence="1">4.2.1.33</ecNumber>
    </recommendedName>
    <alternativeName>
        <fullName evidence="1">Alpha-IPM isomerase</fullName>
        <shortName evidence="1">IPMI</shortName>
    </alternativeName>
    <alternativeName>
        <fullName evidence="1">Isopropylmalate isomerase</fullName>
    </alternativeName>
</protein>
<name>LEUC_PSEA6</name>
<organism>
    <name type="scientific">Pseudoalteromonas atlantica (strain T6c / ATCC BAA-1087)</name>
    <dbReference type="NCBI Taxonomy" id="3042615"/>
    <lineage>
        <taxon>Bacteria</taxon>
        <taxon>Pseudomonadati</taxon>
        <taxon>Pseudomonadota</taxon>
        <taxon>Gammaproteobacteria</taxon>
        <taxon>Alteromonadales</taxon>
        <taxon>Alteromonadaceae</taxon>
        <taxon>Paraglaciecola</taxon>
    </lineage>
</organism>
<accession>Q15QR2</accession>
<evidence type="ECO:0000255" key="1">
    <source>
        <dbReference type="HAMAP-Rule" id="MF_01026"/>
    </source>
</evidence>
<dbReference type="EC" id="4.2.1.33" evidence="1"/>
<dbReference type="EMBL" id="CP000388">
    <property type="protein sequence ID" value="ABG41776.1"/>
    <property type="molecule type" value="Genomic_DNA"/>
</dbReference>
<dbReference type="RefSeq" id="WP_011576006.1">
    <property type="nucleotide sequence ID" value="NC_008228.1"/>
</dbReference>
<dbReference type="SMR" id="Q15QR2"/>
<dbReference type="STRING" id="342610.Patl_3270"/>
<dbReference type="KEGG" id="pat:Patl_3270"/>
<dbReference type="eggNOG" id="COG0065">
    <property type="taxonomic scope" value="Bacteria"/>
</dbReference>
<dbReference type="HOGENOM" id="CLU_006714_3_4_6"/>
<dbReference type="OrthoDB" id="9802769at2"/>
<dbReference type="UniPathway" id="UPA00048">
    <property type="reaction ID" value="UER00071"/>
</dbReference>
<dbReference type="Proteomes" id="UP000001981">
    <property type="component" value="Chromosome"/>
</dbReference>
<dbReference type="GO" id="GO:0003861">
    <property type="term" value="F:3-isopropylmalate dehydratase activity"/>
    <property type="evidence" value="ECO:0007669"/>
    <property type="project" value="UniProtKB-UniRule"/>
</dbReference>
<dbReference type="GO" id="GO:0051539">
    <property type="term" value="F:4 iron, 4 sulfur cluster binding"/>
    <property type="evidence" value="ECO:0007669"/>
    <property type="project" value="UniProtKB-KW"/>
</dbReference>
<dbReference type="GO" id="GO:0046872">
    <property type="term" value="F:metal ion binding"/>
    <property type="evidence" value="ECO:0007669"/>
    <property type="project" value="UniProtKB-KW"/>
</dbReference>
<dbReference type="GO" id="GO:0009098">
    <property type="term" value="P:L-leucine biosynthetic process"/>
    <property type="evidence" value="ECO:0007669"/>
    <property type="project" value="UniProtKB-UniRule"/>
</dbReference>
<dbReference type="CDD" id="cd01583">
    <property type="entry name" value="IPMI"/>
    <property type="match status" value="1"/>
</dbReference>
<dbReference type="FunFam" id="3.30.499.10:FF:000007">
    <property type="entry name" value="3-isopropylmalate dehydratase large subunit"/>
    <property type="match status" value="1"/>
</dbReference>
<dbReference type="Gene3D" id="3.30.499.10">
    <property type="entry name" value="Aconitase, domain 3"/>
    <property type="match status" value="2"/>
</dbReference>
<dbReference type="HAMAP" id="MF_01026">
    <property type="entry name" value="LeuC_type1"/>
    <property type="match status" value="1"/>
</dbReference>
<dbReference type="InterPro" id="IPR004430">
    <property type="entry name" value="3-IsopropMal_deHydase_lsu"/>
</dbReference>
<dbReference type="InterPro" id="IPR015931">
    <property type="entry name" value="Acnase/IPM_dHydase_lsu_aba_1/3"/>
</dbReference>
<dbReference type="InterPro" id="IPR001030">
    <property type="entry name" value="Acoase/IPM_deHydtase_lsu_aba"/>
</dbReference>
<dbReference type="InterPro" id="IPR018136">
    <property type="entry name" value="Aconitase_4Fe-4S_BS"/>
</dbReference>
<dbReference type="InterPro" id="IPR036008">
    <property type="entry name" value="Aconitase_4Fe-4S_dom"/>
</dbReference>
<dbReference type="InterPro" id="IPR050067">
    <property type="entry name" value="IPM_dehydratase_rel_enz"/>
</dbReference>
<dbReference type="InterPro" id="IPR033941">
    <property type="entry name" value="IPMI_cat"/>
</dbReference>
<dbReference type="NCBIfam" id="TIGR00170">
    <property type="entry name" value="leuC"/>
    <property type="match status" value="1"/>
</dbReference>
<dbReference type="NCBIfam" id="NF004016">
    <property type="entry name" value="PRK05478.1"/>
    <property type="match status" value="1"/>
</dbReference>
<dbReference type="NCBIfam" id="NF009116">
    <property type="entry name" value="PRK12466.1"/>
    <property type="match status" value="1"/>
</dbReference>
<dbReference type="PANTHER" id="PTHR43822:SF9">
    <property type="entry name" value="3-ISOPROPYLMALATE DEHYDRATASE"/>
    <property type="match status" value="1"/>
</dbReference>
<dbReference type="PANTHER" id="PTHR43822">
    <property type="entry name" value="HOMOACONITASE, MITOCHONDRIAL-RELATED"/>
    <property type="match status" value="1"/>
</dbReference>
<dbReference type="Pfam" id="PF00330">
    <property type="entry name" value="Aconitase"/>
    <property type="match status" value="1"/>
</dbReference>
<dbReference type="PRINTS" id="PR00415">
    <property type="entry name" value="ACONITASE"/>
</dbReference>
<dbReference type="SUPFAM" id="SSF53732">
    <property type="entry name" value="Aconitase iron-sulfur domain"/>
    <property type="match status" value="1"/>
</dbReference>
<dbReference type="PROSITE" id="PS00450">
    <property type="entry name" value="ACONITASE_1"/>
    <property type="match status" value="1"/>
</dbReference>
<dbReference type="PROSITE" id="PS01244">
    <property type="entry name" value="ACONITASE_2"/>
    <property type="match status" value="1"/>
</dbReference>
<gene>
    <name evidence="1" type="primary">leuC</name>
    <name type="ordered locus">Patl_3270</name>
</gene>
<sequence>MSTTLYDKIFQAHIVDEIGDDALLYIDRHLIHEVTSPQAFDGLAQKGRKVRRPDLTFATMDHSISTRSLAIDACGPANKLQLQTLADNCEANGIQLFPVGHQKQGIVHVMGPELGLIKPGMTVVCGDSHTATHGAFGALAFGIGTSQVEHVFATQTLKQSKGKCMQVKVNGARPLGVTAKDIILAIIGKIGHAGATGCVIEYCGDTIEGLSMEERMTVCNMSIEAGAKAGLIAPDQTTFDYLAGREYAPKGADWDAAVAYWKTLKSDTDAKFDIVVELAATDIAPQVTWGTNPGQVIGVNQPIPAPEDFSDPIDRDSAVKALKYMDIQAGQKLADLTVNHVFIGSCTNGRIEDMRAAAAIAKQGKVAENVTAIVVPGSVAVKAQAEAEQLDKIFLDAGFEWRLPGCSMCLGMNDDILSQGDRCASTSNRNFEGRQGRGARTHLVSPAMAAAAALAGRFADTRDFIAND</sequence>